<organism>
    <name type="scientific">Streptococcus thermophilus (strain CNRZ 1066)</name>
    <dbReference type="NCBI Taxonomy" id="299768"/>
    <lineage>
        <taxon>Bacteria</taxon>
        <taxon>Bacillati</taxon>
        <taxon>Bacillota</taxon>
        <taxon>Bacilli</taxon>
        <taxon>Lactobacillales</taxon>
        <taxon>Streptococcaceae</taxon>
        <taxon>Streptococcus</taxon>
    </lineage>
</organism>
<feature type="chain" id="PRO_0000368816" description="ATP synthase subunit b">
    <location>
        <begin position="1"/>
        <end position="165"/>
    </location>
</feature>
<feature type="transmembrane region" description="Helical" evidence="1">
    <location>
        <begin position="5"/>
        <end position="27"/>
    </location>
</feature>
<evidence type="ECO:0000255" key="1">
    <source>
        <dbReference type="HAMAP-Rule" id="MF_01398"/>
    </source>
</evidence>
<name>ATPF_STRT1</name>
<keyword id="KW-0066">ATP synthesis</keyword>
<keyword id="KW-1003">Cell membrane</keyword>
<keyword id="KW-0138">CF(0)</keyword>
<keyword id="KW-0375">Hydrogen ion transport</keyword>
<keyword id="KW-0406">Ion transport</keyword>
<keyword id="KW-0472">Membrane</keyword>
<keyword id="KW-0812">Transmembrane</keyword>
<keyword id="KW-1133">Transmembrane helix</keyword>
<keyword id="KW-0813">Transport</keyword>
<comment type="function">
    <text evidence="1">F(1)F(0) ATP synthase produces ATP from ADP in the presence of a proton or sodium gradient. F-type ATPases consist of two structural domains, F(1) containing the extramembraneous catalytic core and F(0) containing the membrane proton channel, linked together by a central stalk and a peripheral stalk. During catalysis, ATP synthesis in the catalytic domain of F(1) is coupled via a rotary mechanism of the central stalk subunits to proton translocation.</text>
</comment>
<comment type="function">
    <text evidence="1">Component of the F(0) channel, it forms part of the peripheral stalk, linking F(1) to F(0).</text>
</comment>
<comment type="subunit">
    <text evidence="1">F-type ATPases have 2 components, F(1) - the catalytic core - and F(0) - the membrane proton channel. F(1) has five subunits: alpha(3), beta(3), gamma(1), delta(1), epsilon(1). F(0) has three main subunits: a(1), b(2) and c(10-14). The alpha and beta chains form an alternating ring which encloses part of the gamma chain. F(1) is attached to F(0) by a central stalk formed by the gamma and epsilon chains, while a peripheral stalk is formed by the delta and b chains.</text>
</comment>
<comment type="subcellular location">
    <subcellularLocation>
        <location evidence="1">Cell membrane</location>
        <topology evidence="1">Single-pass membrane protein</topology>
    </subcellularLocation>
</comment>
<comment type="similarity">
    <text evidence="1">Belongs to the ATPase B chain family.</text>
</comment>
<reference key="1">
    <citation type="journal article" date="2004" name="Nat. Biotechnol.">
        <title>Complete sequence and comparative genome analysis of the dairy bacterium Streptococcus thermophilus.</title>
        <authorList>
            <person name="Bolotin A."/>
            <person name="Quinquis B."/>
            <person name="Renault P."/>
            <person name="Sorokin A."/>
            <person name="Ehrlich S.D."/>
            <person name="Kulakauskas S."/>
            <person name="Lapidus A."/>
            <person name="Goltsman E."/>
            <person name="Mazur M."/>
            <person name="Pusch G.D."/>
            <person name="Fonstein M."/>
            <person name="Overbeek R."/>
            <person name="Kyprides N."/>
            <person name="Purnelle B."/>
            <person name="Prozzi D."/>
            <person name="Ngui K."/>
            <person name="Masuy D."/>
            <person name="Hancy F."/>
            <person name="Burteau S."/>
            <person name="Boutry M."/>
            <person name="Delcour J."/>
            <person name="Goffeau A."/>
            <person name="Hols P."/>
        </authorList>
    </citation>
    <scope>NUCLEOTIDE SEQUENCE [LARGE SCALE GENOMIC DNA]</scope>
    <source>
        <strain>CNRZ 1066</strain>
    </source>
</reference>
<protein>
    <recommendedName>
        <fullName evidence="1">ATP synthase subunit b</fullName>
    </recommendedName>
    <alternativeName>
        <fullName evidence="1">ATP synthase F(0) sector subunit b</fullName>
    </alternativeName>
    <alternativeName>
        <fullName evidence="1">ATPase subunit I</fullName>
    </alternativeName>
    <alternativeName>
        <fullName evidence="1">F-type ATPase subunit b</fullName>
        <shortName evidence="1">F-ATPase subunit b</shortName>
    </alternativeName>
</protein>
<dbReference type="EMBL" id="CP000024">
    <property type="protein sequence ID" value="AAV62079.1"/>
    <property type="molecule type" value="Genomic_DNA"/>
</dbReference>
<dbReference type="RefSeq" id="WP_011225594.1">
    <property type="nucleotide sequence ID" value="NC_006449.1"/>
</dbReference>
<dbReference type="SMR" id="Q5M108"/>
<dbReference type="GeneID" id="66898390"/>
<dbReference type="KEGG" id="stc:str0480"/>
<dbReference type="HOGENOM" id="CLU_079215_4_2_9"/>
<dbReference type="GO" id="GO:0005886">
    <property type="term" value="C:plasma membrane"/>
    <property type="evidence" value="ECO:0007669"/>
    <property type="project" value="UniProtKB-SubCell"/>
</dbReference>
<dbReference type="GO" id="GO:0045259">
    <property type="term" value="C:proton-transporting ATP synthase complex"/>
    <property type="evidence" value="ECO:0007669"/>
    <property type="project" value="UniProtKB-KW"/>
</dbReference>
<dbReference type="GO" id="GO:0046933">
    <property type="term" value="F:proton-transporting ATP synthase activity, rotational mechanism"/>
    <property type="evidence" value="ECO:0007669"/>
    <property type="project" value="UniProtKB-UniRule"/>
</dbReference>
<dbReference type="GO" id="GO:0046961">
    <property type="term" value="F:proton-transporting ATPase activity, rotational mechanism"/>
    <property type="evidence" value="ECO:0007669"/>
    <property type="project" value="TreeGrafter"/>
</dbReference>
<dbReference type="CDD" id="cd06503">
    <property type="entry name" value="ATP-synt_Fo_b"/>
    <property type="match status" value="1"/>
</dbReference>
<dbReference type="Gene3D" id="6.10.250.1580">
    <property type="match status" value="1"/>
</dbReference>
<dbReference type="HAMAP" id="MF_01398">
    <property type="entry name" value="ATP_synth_b_bprime"/>
    <property type="match status" value="1"/>
</dbReference>
<dbReference type="InterPro" id="IPR028987">
    <property type="entry name" value="ATP_synth_B-like_membr_sf"/>
</dbReference>
<dbReference type="InterPro" id="IPR002146">
    <property type="entry name" value="ATP_synth_b/b'su_bac/chlpt"/>
</dbReference>
<dbReference type="InterPro" id="IPR005864">
    <property type="entry name" value="ATP_synth_F0_bsu_bac"/>
</dbReference>
<dbReference type="InterPro" id="IPR050059">
    <property type="entry name" value="ATP_synthase_B_chain"/>
</dbReference>
<dbReference type="NCBIfam" id="TIGR01144">
    <property type="entry name" value="ATP_synt_b"/>
    <property type="match status" value="1"/>
</dbReference>
<dbReference type="PANTHER" id="PTHR33445:SF1">
    <property type="entry name" value="ATP SYNTHASE SUBUNIT B"/>
    <property type="match status" value="1"/>
</dbReference>
<dbReference type="PANTHER" id="PTHR33445">
    <property type="entry name" value="ATP SYNTHASE SUBUNIT B', CHLOROPLASTIC"/>
    <property type="match status" value="1"/>
</dbReference>
<dbReference type="Pfam" id="PF00430">
    <property type="entry name" value="ATP-synt_B"/>
    <property type="match status" value="1"/>
</dbReference>
<dbReference type="SUPFAM" id="SSF81573">
    <property type="entry name" value="F1F0 ATP synthase subunit B, membrane domain"/>
    <property type="match status" value="1"/>
</dbReference>
<sequence length="165" mass="18287">MSLLINSTTLGNIIITLGSVFLLYYLIRKFAWDQITGIFVAREKKIATDIDSAENARQEAEILVQKRQEELAAARTEATQIIDEAKKTGKTKESKIIAEAYDEAKRLKEKANQDIAQSWVEALAGVKGEVADLTVLLAEKVMKQNLDAKAQSDLIDSYLDQLGDA</sequence>
<gene>
    <name evidence="1" type="primary">atpF</name>
    <name type="ordered locus">str0480</name>
</gene>
<accession>Q5M108</accession>
<proteinExistence type="inferred from homology"/>